<accession>Q6LZQ3</accession>
<feature type="chain" id="PRO_1000085700" description="Probable GTP 3',8-cyclase">
    <location>
        <begin position="1"/>
        <end position="297"/>
    </location>
</feature>
<feature type="domain" description="Radical SAM core" evidence="2">
    <location>
        <begin position="4"/>
        <end position="227"/>
    </location>
</feature>
<feature type="binding site" evidence="1">
    <location>
        <position position="13"/>
    </location>
    <ligand>
        <name>GTP</name>
        <dbReference type="ChEBI" id="CHEBI:37565"/>
    </ligand>
</feature>
<feature type="binding site" evidence="1">
    <location>
        <position position="20"/>
    </location>
    <ligand>
        <name>[4Fe-4S] cluster</name>
        <dbReference type="ChEBI" id="CHEBI:49883"/>
        <label>1</label>
        <note>4Fe-4S-S-AdoMet</note>
    </ligand>
</feature>
<feature type="binding site" evidence="1">
    <location>
        <position position="24"/>
    </location>
    <ligand>
        <name>[4Fe-4S] cluster</name>
        <dbReference type="ChEBI" id="CHEBI:49883"/>
        <label>1</label>
        <note>4Fe-4S-S-AdoMet</note>
    </ligand>
</feature>
<feature type="binding site" evidence="1">
    <location>
        <position position="26"/>
    </location>
    <ligand>
        <name>S-adenosyl-L-methionine</name>
        <dbReference type="ChEBI" id="CHEBI:59789"/>
    </ligand>
</feature>
<feature type="binding site" evidence="1">
    <location>
        <position position="27"/>
    </location>
    <ligand>
        <name>[4Fe-4S] cluster</name>
        <dbReference type="ChEBI" id="CHEBI:49883"/>
        <label>1</label>
        <note>4Fe-4S-S-AdoMet</note>
    </ligand>
</feature>
<feature type="binding site" evidence="1">
    <location>
        <position position="61"/>
    </location>
    <ligand>
        <name>GTP</name>
        <dbReference type="ChEBI" id="CHEBI:37565"/>
    </ligand>
</feature>
<feature type="binding site" evidence="1">
    <location>
        <position position="65"/>
    </location>
    <ligand>
        <name>S-adenosyl-L-methionine</name>
        <dbReference type="ChEBI" id="CHEBI:59789"/>
    </ligand>
</feature>
<feature type="binding site" evidence="1">
    <location>
        <position position="91"/>
    </location>
    <ligand>
        <name>GTP</name>
        <dbReference type="ChEBI" id="CHEBI:37565"/>
    </ligand>
</feature>
<feature type="binding site" evidence="1">
    <location>
        <position position="115"/>
    </location>
    <ligand>
        <name>S-adenosyl-L-methionine</name>
        <dbReference type="ChEBI" id="CHEBI:59789"/>
    </ligand>
</feature>
<feature type="binding site" evidence="1">
    <location>
        <position position="152"/>
    </location>
    <ligand>
        <name>GTP</name>
        <dbReference type="ChEBI" id="CHEBI:37565"/>
    </ligand>
</feature>
<feature type="binding site" evidence="1">
    <location>
        <position position="243"/>
    </location>
    <ligand>
        <name>[4Fe-4S] cluster</name>
        <dbReference type="ChEBI" id="CHEBI:49883"/>
        <label>2</label>
        <note>4Fe-4S-substrate</note>
    </ligand>
</feature>
<feature type="binding site" evidence="1">
    <location>
        <position position="246"/>
    </location>
    <ligand>
        <name>[4Fe-4S] cluster</name>
        <dbReference type="ChEBI" id="CHEBI:49883"/>
        <label>2</label>
        <note>4Fe-4S-substrate</note>
    </ligand>
</feature>
<feature type="binding site" evidence="1">
    <location>
        <begin position="248"/>
        <end position="250"/>
    </location>
    <ligand>
        <name>GTP</name>
        <dbReference type="ChEBI" id="CHEBI:37565"/>
    </ligand>
</feature>
<feature type="binding site" evidence="1">
    <location>
        <position position="260"/>
    </location>
    <ligand>
        <name>[4Fe-4S] cluster</name>
        <dbReference type="ChEBI" id="CHEBI:49883"/>
        <label>2</label>
        <note>4Fe-4S-substrate</note>
    </ligand>
</feature>
<sequence>MEDRYGRQIRSFRLSITPKCNLKCFYCHKEGRNEEHGKLMSADEIGKIVNSSLEFGVRKIKISGGEPLLRTDLPEIISYIKNEQIKDISLTTNGILLEKYAQKLKDAGLDRVNVSLDTLDPVQYKKITAGGNIESVKKGIEKAIEVGLTPLKVNFLAMDCTVNQLPAIMDYCRKIGAILQIIEFIPMEPELKHHHVDVVPIEEEIAKNADNVFTRKFMQNRKKYVIDGLEVEFVRPMDNTEFCNHCTRIRLTYDGYLKPCLLRDDNLVDVANPLRNGEDIRKYFIKCIHEREPFCKP</sequence>
<gene>
    <name evidence="1" type="primary">moaA</name>
    <name type="ordered locus">MMP0571</name>
</gene>
<evidence type="ECO:0000255" key="1">
    <source>
        <dbReference type="HAMAP-Rule" id="MF_01225"/>
    </source>
</evidence>
<evidence type="ECO:0000255" key="2">
    <source>
        <dbReference type="PROSITE-ProRule" id="PRU01266"/>
    </source>
</evidence>
<keyword id="KW-0004">4Fe-4S</keyword>
<keyword id="KW-0342">GTP-binding</keyword>
<keyword id="KW-0408">Iron</keyword>
<keyword id="KW-0411">Iron-sulfur</keyword>
<keyword id="KW-0456">Lyase</keyword>
<keyword id="KW-0479">Metal-binding</keyword>
<keyword id="KW-0501">Molybdenum cofactor biosynthesis</keyword>
<keyword id="KW-0547">Nucleotide-binding</keyword>
<keyword id="KW-1185">Reference proteome</keyword>
<keyword id="KW-0949">S-adenosyl-L-methionine</keyword>
<dbReference type="EC" id="4.1.99.22" evidence="1"/>
<dbReference type="EMBL" id="BX950229">
    <property type="protein sequence ID" value="CAF30127.1"/>
    <property type="molecule type" value="Genomic_DNA"/>
</dbReference>
<dbReference type="RefSeq" id="WP_011170515.1">
    <property type="nucleotide sequence ID" value="NC_005791.1"/>
</dbReference>
<dbReference type="SMR" id="Q6LZQ3"/>
<dbReference type="STRING" id="267377.MMP0571"/>
<dbReference type="EnsemblBacteria" id="CAF30127">
    <property type="protein sequence ID" value="CAF30127"/>
    <property type="gene ID" value="MMP0571"/>
</dbReference>
<dbReference type="GeneID" id="41279037"/>
<dbReference type="KEGG" id="mmp:MMP0571"/>
<dbReference type="PATRIC" id="fig|267377.15.peg.584"/>
<dbReference type="eggNOG" id="arCOG00930">
    <property type="taxonomic scope" value="Archaea"/>
</dbReference>
<dbReference type="HOGENOM" id="CLU_009273_0_1_2"/>
<dbReference type="OrthoDB" id="6925at2157"/>
<dbReference type="UniPathway" id="UPA00344"/>
<dbReference type="Proteomes" id="UP000000590">
    <property type="component" value="Chromosome"/>
</dbReference>
<dbReference type="GO" id="GO:0051539">
    <property type="term" value="F:4 iron, 4 sulfur cluster binding"/>
    <property type="evidence" value="ECO:0007669"/>
    <property type="project" value="UniProtKB-UniRule"/>
</dbReference>
<dbReference type="GO" id="GO:0061799">
    <property type="term" value="F:cyclic pyranopterin monophosphate synthase activity"/>
    <property type="evidence" value="ECO:0007669"/>
    <property type="project" value="TreeGrafter"/>
</dbReference>
<dbReference type="GO" id="GO:0061798">
    <property type="term" value="F:GTP 3',8'-cyclase activity"/>
    <property type="evidence" value="ECO:0007669"/>
    <property type="project" value="UniProtKB-UniRule"/>
</dbReference>
<dbReference type="GO" id="GO:0005525">
    <property type="term" value="F:GTP binding"/>
    <property type="evidence" value="ECO:0007669"/>
    <property type="project" value="UniProtKB-UniRule"/>
</dbReference>
<dbReference type="GO" id="GO:0046872">
    <property type="term" value="F:metal ion binding"/>
    <property type="evidence" value="ECO:0007669"/>
    <property type="project" value="UniProtKB-KW"/>
</dbReference>
<dbReference type="GO" id="GO:1904047">
    <property type="term" value="F:S-adenosyl-L-methionine binding"/>
    <property type="evidence" value="ECO:0007669"/>
    <property type="project" value="UniProtKB-UniRule"/>
</dbReference>
<dbReference type="GO" id="GO:0006777">
    <property type="term" value="P:Mo-molybdopterin cofactor biosynthetic process"/>
    <property type="evidence" value="ECO:0007669"/>
    <property type="project" value="UniProtKB-UniRule"/>
</dbReference>
<dbReference type="CDD" id="cd01335">
    <property type="entry name" value="Radical_SAM"/>
    <property type="match status" value="1"/>
</dbReference>
<dbReference type="Gene3D" id="3.20.20.70">
    <property type="entry name" value="Aldolase class I"/>
    <property type="match status" value="1"/>
</dbReference>
<dbReference type="HAMAP" id="MF_01225_A">
    <property type="entry name" value="MoaA_A"/>
    <property type="match status" value="1"/>
</dbReference>
<dbReference type="InterPro" id="IPR013785">
    <property type="entry name" value="Aldolase_TIM"/>
</dbReference>
<dbReference type="InterPro" id="IPR006638">
    <property type="entry name" value="Elp3/MiaA/NifB-like_rSAM"/>
</dbReference>
<dbReference type="InterPro" id="IPR013485">
    <property type="entry name" value="MoaA_arc"/>
</dbReference>
<dbReference type="InterPro" id="IPR010505">
    <property type="entry name" value="MoaA_twitch"/>
</dbReference>
<dbReference type="InterPro" id="IPR050105">
    <property type="entry name" value="MoCo_biosynth_MoaA/MoaC"/>
</dbReference>
<dbReference type="InterPro" id="IPR007197">
    <property type="entry name" value="rSAM"/>
</dbReference>
<dbReference type="NCBIfam" id="TIGR02668">
    <property type="entry name" value="moaA_archaeal"/>
    <property type="match status" value="1"/>
</dbReference>
<dbReference type="NCBIfam" id="NF001199">
    <property type="entry name" value="PRK00164.2-1"/>
    <property type="match status" value="1"/>
</dbReference>
<dbReference type="PANTHER" id="PTHR22960:SF0">
    <property type="entry name" value="MOLYBDENUM COFACTOR BIOSYNTHESIS PROTEIN 1"/>
    <property type="match status" value="1"/>
</dbReference>
<dbReference type="PANTHER" id="PTHR22960">
    <property type="entry name" value="MOLYBDOPTERIN COFACTOR SYNTHESIS PROTEIN A"/>
    <property type="match status" value="1"/>
</dbReference>
<dbReference type="Pfam" id="PF13353">
    <property type="entry name" value="Fer4_12"/>
    <property type="match status" value="1"/>
</dbReference>
<dbReference type="Pfam" id="PF06463">
    <property type="entry name" value="Mob_synth_C"/>
    <property type="match status" value="1"/>
</dbReference>
<dbReference type="Pfam" id="PF04055">
    <property type="entry name" value="Radical_SAM"/>
    <property type="match status" value="1"/>
</dbReference>
<dbReference type="SFLD" id="SFLDG01383">
    <property type="entry name" value="cyclic_pyranopterin_phosphate"/>
    <property type="match status" value="1"/>
</dbReference>
<dbReference type="SFLD" id="SFLDG01216">
    <property type="entry name" value="thioether_bond_formation_requi"/>
    <property type="match status" value="1"/>
</dbReference>
<dbReference type="SMART" id="SM00729">
    <property type="entry name" value="Elp3"/>
    <property type="match status" value="1"/>
</dbReference>
<dbReference type="SUPFAM" id="SSF102114">
    <property type="entry name" value="Radical SAM enzymes"/>
    <property type="match status" value="1"/>
</dbReference>
<dbReference type="PROSITE" id="PS51918">
    <property type="entry name" value="RADICAL_SAM"/>
    <property type="match status" value="1"/>
</dbReference>
<protein>
    <recommendedName>
        <fullName evidence="1">Probable GTP 3',8-cyclase</fullName>
        <ecNumber evidence="1">4.1.99.22</ecNumber>
    </recommendedName>
    <alternativeName>
        <fullName evidence="1">Molybdenum cofactor biosynthesis protein A</fullName>
    </alternativeName>
</protein>
<reference key="1">
    <citation type="journal article" date="2004" name="J. Bacteriol.">
        <title>Complete genome sequence of the genetically tractable hydrogenotrophic methanogen Methanococcus maripaludis.</title>
        <authorList>
            <person name="Hendrickson E.L."/>
            <person name="Kaul R."/>
            <person name="Zhou Y."/>
            <person name="Bovee D."/>
            <person name="Chapman P."/>
            <person name="Chung J."/>
            <person name="Conway de Macario E."/>
            <person name="Dodsworth J.A."/>
            <person name="Gillett W."/>
            <person name="Graham D.E."/>
            <person name="Hackett M."/>
            <person name="Haydock A.K."/>
            <person name="Kang A."/>
            <person name="Land M.L."/>
            <person name="Levy R."/>
            <person name="Lie T.J."/>
            <person name="Major T.A."/>
            <person name="Moore B.C."/>
            <person name="Porat I."/>
            <person name="Palmeiri A."/>
            <person name="Rouse G."/>
            <person name="Saenphimmachak C."/>
            <person name="Soell D."/>
            <person name="Van Dien S."/>
            <person name="Wang T."/>
            <person name="Whitman W.B."/>
            <person name="Xia Q."/>
            <person name="Zhang Y."/>
            <person name="Larimer F.W."/>
            <person name="Olson M.V."/>
            <person name="Leigh J.A."/>
        </authorList>
    </citation>
    <scope>NUCLEOTIDE SEQUENCE [LARGE SCALE GENOMIC DNA]</scope>
    <source>
        <strain>DSM 14266 / JCM 13030 / NBRC 101832 / S2 / LL</strain>
    </source>
</reference>
<organism>
    <name type="scientific">Methanococcus maripaludis (strain DSM 14266 / JCM 13030 / NBRC 101832 / S2 / LL)</name>
    <dbReference type="NCBI Taxonomy" id="267377"/>
    <lineage>
        <taxon>Archaea</taxon>
        <taxon>Methanobacteriati</taxon>
        <taxon>Methanobacteriota</taxon>
        <taxon>Methanomada group</taxon>
        <taxon>Methanococci</taxon>
        <taxon>Methanococcales</taxon>
        <taxon>Methanococcaceae</taxon>
        <taxon>Methanococcus</taxon>
    </lineage>
</organism>
<name>MOAA_METMP</name>
<proteinExistence type="inferred from homology"/>
<comment type="function">
    <text evidence="1">Catalyzes the cyclization of GTP to (8S)-3',8-cyclo-7,8-dihydroguanosine 5'-triphosphate.</text>
</comment>
<comment type="catalytic activity">
    <reaction evidence="1">
        <text>GTP + AH2 + S-adenosyl-L-methionine = (8S)-3',8-cyclo-7,8-dihydroguanosine 5'-triphosphate + 5'-deoxyadenosine + L-methionine + A + H(+)</text>
        <dbReference type="Rhea" id="RHEA:49576"/>
        <dbReference type="ChEBI" id="CHEBI:13193"/>
        <dbReference type="ChEBI" id="CHEBI:15378"/>
        <dbReference type="ChEBI" id="CHEBI:17319"/>
        <dbReference type="ChEBI" id="CHEBI:17499"/>
        <dbReference type="ChEBI" id="CHEBI:37565"/>
        <dbReference type="ChEBI" id="CHEBI:57844"/>
        <dbReference type="ChEBI" id="CHEBI:59789"/>
        <dbReference type="ChEBI" id="CHEBI:131766"/>
        <dbReference type="EC" id="4.1.99.22"/>
    </reaction>
</comment>
<comment type="cofactor">
    <cofactor evidence="1">
        <name>[4Fe-4S] cluster</name>
        <dbReference type="ChEBI" id="CHEBI:49883"/>
    </cofactor>
    <text evidence="1">Binds 2 [4Fe-4S] clusters. Binds 1 [4Fe-4S] cluster coordinated with 3 cysteines and an exchangeable S-adenosyl-L-methionine and 1 [4Fe-4S] cluster coordinated with 3 cysteines and the GTP-derived substrate.</text>
</comment>
<comment type="pathway">
    <text evidence="1">Cofactor biosynthesis; molybdopterin biosynthesis.</text>
</comment>
<comment type="similarity">
    <text evidence="1">Belongs to the radical SAM superfamily. MoaA family.</text>
</comment>